<proteinExistence type="evidence at protein level"/>
<organism>
    <name type="scientific">Mycobacterium tuberculosis (strain ATCC 25618 / H37Rv)</name>
    <dbReference type="NCBI Taxonomy" id="83332"/>
    <lineage>
        <taxon>Bacteria</taxon>
        <taxon>Bacillati</taxon>
        <taxon>Actinomycetota</taxon>
        <taxon>Actinomycetes</taxon>
        <taxon>Mycobacteriales</taxon>
        <taxon>Mycobacteriaceae</taxon>
        <taxon>Mycobacterium</taxon>
        <taxon>Mycobacterium tuberculosis complex</taxon>
    </lineage>
</organism>
<keyword id="KW-0002">3D-structure</keyword>
<keyword id="KW-0134">Cell wall</keyword>
<keyword id="KW-1185">Reference proteome</keyword>
<keyword id="KW-0964">Secreted</keyword>
<keyword id="KW-0843">Virulence</keyword>
<comment type="function">
    <text evidence="3">Promotes the intracellular survival of recombinant Mycobacterium within macrophages by regulating host inflammatory cytokines production and inhibiting cell late apoptosis.</text>
</comment>
<comment type="subunit">
    <text evidence="2">Forms a heterodimer with PPE15 (PubMed:28842489). The dimer forms a 1:1:1 heterotrimeric complex with EspG5 (PubMed:28842489).</text>
</comment>
<comment type="subcellular location">
    <subcellularLocation>
        <location evidence="3">Secreted</location>
        <location evidence="3">Cell wall</location>
    </subcellularLocation>
    <text evidence="3">Localizes to the cell wall when expressed in M.smegmatis.</text>
</comment>
<comment type="similarity">
    <text evidence="4">Belongs to the mycobacterial PE family.</text>
</comment>
<evidence type="ECO:0000255" key="1"/>
<evidence type="ECO:0000269" key="2">
    <source>
    </source>
</evidence>
<evidence type="ECO:0000269" key="3">
    <source>
    </source>
</evidence>
<evidence type="ECO:0000305" key="4"/>
<evidence type="ECO:0000312" key="5">
    <source>
        <dbReference type="EMBL" id="CCP43791.1"/>
    </source>
</evidence>
<evidence type="ECO:0007744" key="6">
    <source>
        <dbReference type="PDB" id="5XFS"/>
    </source>
</evidence>
<evidence type="ECO:0007829" key="7">
    <source>
        <dbReference type="PDB" id="5XFS"/>
    </source>
</evidence>
<reference key="1">
    <citation type="journal article" date="1998" name="Nature">
        <title>Deciphering the biology of Mycobacterium tuberculosis from the complete genome sequence.</title>
        <authorList>
            <person name="Cole S.T."/>
            <person name="Brosch R."/>
            <person name="Parkhill J."/>
            <person name="Garnier T."/>
            <person name="Churcher C.M."/>
            <person name="Harris D.E."/>
            <person name="Gordon S.V."/>
            <person name="Eiglmeier K."/>
            <person name="Gas S."/>
            <person name="Barry C.E. III"/>
            <person name="Tekaia F."/>
            <person name="Badcock K."/>
            <person name="Basham D."/>
            <person name="Brown D."/>
            <person name="Chillingworth T."/>
            <person name="Connor R."/>
            <person name="Davies R.M."/>
            <person name="Devlin K."/>
            <person name="Feltwell T."/>
            <person name="Gentles S."/>
            <person name="Hamlin N."/>
            <person name="Holroyd S."/>
            <person name="Hornsby T."/>
            <person name="Jagels K."/>
            <person name="Krogh A."/>
            <person name="McLean J."/>
            <person name="Moule S."/>
            <person name="Murphy L.D."/>
            <person name="Oliver S."/>
            <person name="Osborne J."/>
            <person name="Quail M.A."/>
            <person name="Rajandream M.A."/>
            <person name="Rogers J."/>
            <person name="Rutter S."/>
            <person name="Seeger K."/>
            <person name="Skelton S."/>
            <person name="Squares S."/>
            <person name="Squares R."/>
            <person name="Sulston J.E."/>
            <person name="Taylor K."/>
            <person name="Whitehead S."/>
            <person name="Barrell B.G."/>
        </authorList>
    </citation>
    <scope>NUCLEOTIDE SEQUENCE [LARGE SCALE GENOMIC DNA]</scope>
    <source>
        <strain>ATCC 25618 / H37Rv</strain>
    </source>
</reference>
<reference key="2">
    <citation type="journal article" date="2023" name="DNA Cell Biol.">
        <title>Mycobacterium tuberculosis PE8 (Rv1040c) Promotes the Intracellular Survival of Recombinant Mycobacterium by Regulating Host Inflammatory Cytokines and Inhibiting Cell Late Apoptosis.</title>
        <authorList>
            <person name="Xu T."/>
            <person name="Wang C."/>
            <person name="Li M."/>
            <person name="Yuan M."/>
            <person name="Wei J."/>
            <person name="Li B."/>
            <person name="Qian Z."/>
            <person name="Wang T."/>
            <person name="Wang X."/>
            <person name="Wang H."/>
        </authorList>
    </citation>
    <scope>FUNCTION</scope>
    <scope>SUBCELLULAR LOCATION</scope>
    <source>
        <strain>H37Rv</strain>
    </source>
</reference>
<reference evidence="6" key="3">
    <citation type="journal article" date="2017" name="J. Biol. Chem.">
        <title>Structural basis of the PE-PPE protein interaction in Mycobacterium tuberculosis.</title>
        <authorList>
            <person name="Chen X."/>
            <person name="Cheng H.F."/>
            <person name="Zhou J."/>
            <person name="Chan C.Y."/>
            <person name="Lau K.F."/>
            <person name="Tsui S.K."/>
            <person name="Au S.W."/>
        </authorList>
    </citation>
    <scope>X-RAY CRYSTALLOGRAPHY (2.90 ANGSTROMS) OF 1-99 IN COMPLEX WITH PPE15 AND ESPG5</scope>
    <source>
        <strain>H37Rv</strain>
    </source>
</reference>
<gene>
    <name evidence="5" type="primary">PE8</name>
    <name evidence="5" type="ordered locus">Rv1040c</name>
</gene>
<dbReference type="EMBL" id="AL123456">
    <property type="protein sequence ID" value="CCP43791.1"/>
    <property type="molecule type" value="Genomic_DNA"/>
</dbReference>
<dbReference type="RefSeq" id="WP_003405370.1">
    <property type="nucleotide sequence ID" value="NZ_NVQJ01000098.1"/>
</dbReference>
<dbReference type="RefSeq" id="YP_177779.1">
    <property type="nucleotide sequence ID" value="NC_000962.3"/>
</dbReference>
<dbReference type="PDB" id="5XFS">
    <property type="method" value="X-ray"/>
    <property type="resolution" value="2.90 A"/>
    <property type="chains" value="A=1-99"/>
</dbReference>
<dbReference type="PDBsum" id="5XFS"/>
<dbReference type="SMR" id="L7N667"/>
<dbReference type="STRING" id="83332.Rv1040c"/>
<dbReference type="PaxDb" id="83332-Rv1040c"/>
<dbReference type="DNASU" id="888533"/>
<dbReference type="GeneID" id="888533"/>
<dbReference type="KEGG" id="mtu:Rv1040c"/>
<dbReference type="KEGG" id="mtv:RVBD_1040c"/>
<dbReference type="PATRIC" id="fig|83332.111.peg.1154"/>
<dbReference type="TubercuList" id="Rv1040c"/>
<dbReference type="eggNOG" id="ENOG5030I1I">
    <property type="taxonomic scope" value="Bacteria"/>
</dbReference>
<dbReference type="InParanoid" id="L7N667"/>
<dbReference type="OrthoDB" id="4764762at2"/>
<dbReference type="PhylomeDB" id="L7N667"/>
<dbReference type="Proteomes" id="UP000001584">
    <property type="component" value="Chromosome"/>
</dbReference>
<dbReference type="GO" id="GO:0005576">
    <property type="term" value="C:extracellular region"/>
    <property type="evidence" value="ECO:0007669"/>
    <property type="project" value="UniProtKB-KW"/>
</dbReference>
<dbReference type="Gene3D" id="1.10.287.850">
    <property type="entry name" value="HP0062-like domain"/>
    <property type="match status" value="1"/>
</dbReference>
<dbReference type="InterPro" id="IPR000084">
    <property type="entry name" value="PE-PGRS_N"/>
</dbReference>
<dbReference type="InterPro" id="IPR022171">
    <property type="entry name" value="PPE_C"/>
</dbReference>
<dbReference type="Pfam" id="PF00934">
    <property type="entry name" value="PE"/>
    <property type="match status" value="1"/>
</dbReference>
<dbReference type="Pfam" id="PF12484">
    <property type="entry name" value="PPE-SVP"/>
    <property type="match status" value="1"/>
</dbReference>
<dbReference type="SUPFAM" id="SSF140459">
    <property type="entry name" value="PE/PPE dimer-like"/>
    <property type="match status" value="1"/>
</dbReference>
<accession>L7N667</accession>
<accession>I6Y5G5</accession>
<name>PE08_MYCTU</name>
<sequence length="275" mass="26225">MSFLKTVPEELTAAAAQLGTIGAAMAAQNAAAAAPTTAIAPAALDEVSALQAALFTAYGTFYQQVSAEAQAMHDMFVNTLGISAGTYGVTESLNSSAAASPLSGITGEASAIIQATTGLFPPELSGGIGNILNIGAGNWASATSTLIGLAGGGLLPAEEAAEAASALGGEAALGELGALGAAEAALGEAGIAAGLGSASAIGMLSVPPAWAGQATLVSTTSTLPGAGWTAAAPQAAAGTFIPGMPGVASAARNSAGFGAPRYGVKPIVMPKPATV</sequence>
<feature type="chain" id="PRO_0000461211" description="PE family protein PE8">
    <location>
        <begin position="1"/>
        <end position="275"/>
    </location>
</feature>
<feature type="domain" description="PE" evidence="1">
    <location>
        <begin position="5"/>
        <end position="93"/>
    </location>
</feature>
<feature type="helix" evidence="7">
    <location>
        <begin position="8"/>
        <end position="31"/>
    </location>
</feature>
<feature type="helix" evidence="7">
    <location>
        <begin position="33"/>
        <end position="37"/>
    </location>
</feature>
<feature type="strand" evidence="7">
    <location>
        <begin position="42"/>
        <end position="45"/>
    </location>
</feature>
<feature type="helix" evidence="7">
    <location>
        <begin position="46"/>
        <end position="82"/>
    </location>
</feature>
<protein>
    <recommendedName>
        <fullName evidence="4">PE family protein PE8</fullName>
    </recommendedName>
</protein>